<accession>P50303</accession>
<accession>A0A2R6Q759</accession>
<evidence type="ECO:0000250" key="1"/>
<evidence type="ECO:0000250" key="2">
    <source>
        <dbReference type="UniProtKB" id="P0A817"/>
    </source>
</evidence>
<evidence type="ECO:0000250" key="3">
    <source>
        <dbReference type="UniProtKB" id="P13444"/>
    </source>
</evidence>
<evidence type="ECO:0000250" key="4">
    <source>
        <dbReference type="UniProtKB" id="Q00266"/>
    </source>
</evidence>
<evidence type="ECO:0000250" key="5">
    <source>
        <dbReference type="UniProtKB" id="Q96551"/>
    </source>
</evidence>
<evidence type="ECO:0000305" key="6"/>
<evidence type="ECO:0000312" key="7">
    <source>
        <dbReference type="EMBL" id="PSS03108.1"/>
    </source>
</evidence>
<comment type="function">
    <text evidence="5">Catalyzes the formation of S-adenosylmethionine from methionine and ATP. The reaction comprises two steps that are both catalyzed by the same enzyme: formation of S-adenosylmethionine (AdoMet) and triphosphate, and subsequent hydrolysis of the triphosphate.</text>
</comment>
<comment type="catalytic activity">
    <reaction evidence="5">
        <text>L-methionine + ATP + H2O = S-adenosyl-L-methionine + phosphate + diphosphate</text>
        <dbReference type="Rhea" id="RHEA:21080"/>
        <dbReference type="ChEBI" id="CHEBI:15377"/>
        <dbReference type="ChEBI" id="CHEBI:30616"/>
        <dbReference type="ChEBI" id="CHEBI:33019"/>
        <dbReference type="ChEBI" id="CHEBI:43474"/>
        <dbReference type="ChEBI" id="CHEBI:57844"/>
        <dbReference type="ChEBI" id="CHEBI:59789"/>
        <dbReference type="EC" id="2.5.1.6"/>
    </reaction>
</comment>
<comment type="cofactor">
    <cofactor evidence="5">
        <name>Mn(2+)</name>
        <dbReference type="ChEBI" id="CHEBI:29035"/>
    </cofactor>
    <cofactor evidence="5">
        <name>Mg(2+)</name>
        <dbReference type="ChEBI" id="CHEBI:18420"/>
    </cofactor>
    <cofactor evidence="5">
        <name>Co(2+)</name>
        <dbReference type="ChEBI" id="CHEBI:48828"/>
    </cofactor>
    <text evidence="3 5">Binds 2 divalent ions per subunit. The metal ions interact primarily with the substrate (By similarity). Can utilize magnesium, manganese or cobalt (in vitro) (By similarity).</text>
</comment>
<comment type="cofactor">
    <cofactor evidence="5">
        <name>K(+)</name>
        <dbReference type="ChEBI" id="CHEBI:29103"/>
    </cofactor>
    <text evidence="3">Binds 1 potassium ion per subunit. The potassium ion interacts primarily with the substrate (By similarity).</text>
</comment>
<comment type="pathway">
    <text evidence="5">Amino-acid biosynthesis; S-adenosyl-L-methionine biosynthesis; S-adenosyl-L-methionine from L-methionine: step 1/1.</text>
</comment>
<comment type="subunit">
    <text evidence="1">Homotetramer.</text>
</comment>
<comment type="subcellular location">
    <subcellularLocation>
        <location evidence="1">Cytoplasm</location>
    </subcellularLocation>
</comment>
<comment type="similarity">
    <text evidence="6">Belongs to the AdoMet synthase family.</text>
</comment>
<sequence>METFLFTSESVNEGHPDKLCDQISDAVLDACLEQDPDSKVACETCTKTNMVMVFGEITTKGNIDYEKIVRDTCRNIGFVSDDVGLDADNCKVLVNIEQQSPDIAQGVHGHLTKRPEEIGAGDQGHMFGYATDETPELMPLSHVLATKLGARLTEVRKDGTCPWLRPDGKTQVTIEYYNENGAMVPIRVHTVLISTQHDETVTNDKIAADLKEHVIRPVIPEKYLDEKTIFHLNPSGRFVIGGPHGDAGLTGRKIIIDTYGGWGAHGGGAFSGKDPTKVDRSGAYIVRQAAKSIVASGLARRCIVQVSYAIGVPEPLSVFVDTYGTGKIPDKEILKIVKESFDFRPGMIAIHLDLKRGGNGRFLKTAAYGHFGRDDADFTWEVVKPLKWEKPQD</sequence>
<dbReference type="EC" id="2.5.1.6" evidence="5"/>
<dbReference type="EMBL" id="U17241">
    <property type="protein sequence ID" value="AAA81379.1"/>
    <property type="molecule type" value="mRNA"/>
</dbReference>
<dbReference type="EMBL" id="NKQK01000019">
    <property type="protein sequence ID" value="PSS03108.1"/>
    <property type="molecule type" value="Genomic_DNA"/>
</dbReference>
<dbReference type="SMR" id="P50303"/>
<dbReference type="FunCoup" id="P50303">
    <property type="interactions" value="4087"/>
</dbReference>
<dbReference type="STRING" id="1590841.P50303"/>
<dbReference type="EnsemblPlants" id="PSS03108">
    <property type="protein sequence ID" value="PSS03108"/>
    <property type="gene ID" value="CEY00_Acc21491"/>
</dbReference>
<dbReference type="Gramene" id="PSS03108">
    <property type="protein sequence ID" value="PSS03108"/>
    <property type="gene ID" value="CEY00_Acc21491"/>
</dbReference>
<dbReference type="InParanoid" id="P50303"/>
<dbReference type="OMA" id="CEYAFRH"/>
<dbReference type="OrthoDB" id="5852090at2759"/>
<dbReference type="UniPathway" id="UPA00315">
    <property type="reaction ID" value="UER00080"/>
</dbReference>
<dbReference type="Proteomes" id="UP000241394">
    <property type="component" value="Chromosome LG19"/>
</dbReference>
<dbReference type="GO" id="GO:0005737">
    <property type="term" value="C:cytoplasm"/>
    <property type="evidence" value="ECO:0007669"/>
    <property type="project" value="UniProtKB-SubCell"/>
</dbReference>
<dbReference type="GO" id="GO:0005524">
    <property type="term" value="F:ATP binding"/>
    <property type="evidence" value="ECO:0007669"/>
    <property type="project" value="UniProtKB-KW"/>
</dbReference>
<dbReference type="GO" id="GO:0046872">
    <property type="term" value="F:metal ion binding"/>
    <property type="evidence" value="ECO:0007669"/>
    <property type="project" value="UniProtKB-KW"/>
</dbReference>
<dbReference type="GO" id="GO:0004478">
    <property type="term" value="F:methionine adenosyltransferase activity"/>
    <property type="evidence" value="ECO:0007669"/>
    <property type="project" value="UniProtKB-EC"/>
</dbReference>
<dbReference type="GO" id="GO:0006730">
    <property type="term" value="P:one-carbon metabolic process"/>
    <property type="evidence" value="ECO:0007669"/>
    <property type="project" value="UniProtKB-KW"/>
</dbReference>
<dbReference type="GO" id="GO:0006556">
    <property type="term" value="P:S-adenosylmethionine biosynthetic process"/>
    <property type="evidence" value="ECO:0007669"/>
    <property type="project" value="UniProtKB-UniPathway"/>
</dbReference>
<dbReference type="CDD" id="cd18079">
    <property type="entry name" value="S-AdoMet_synt"/>
    <property type="match status" value="1"/>
</dbReference>
<dbReference type="FunFam" id="3.30.300.10:FF:000001">
    <property type="entry name" value="S-adenosylmethionine synthase"/>
    <property type="match status" value="1"/>
</dbReference>
<dbReference type="FunFam" id="3.30.300.10:FF:000003">
    <property type="entry name" value="S-adenosylmethionine synthase"/>
    <property type="match status" value="1"/>
</dbReference>
<dbReference type="FunFam" id="3.30.300.10:FF:000004">
    <property type="entry name" value="S-adenosylmethionine synthase"/>
    <property type="match status" value="1"/>
</dbReference>
<dbReference type="Gene3D" id="3.30.300.10">
    <property type="match status" value="3"/>
</dbReference>
<dbReference type="HAMAP" id="MF_00086">
    <property type="entry name" value="S_AdoMet_synth1"/>
    <property type="match status" value="1"/>
</dbReference>
<dbReference type="InterPro" id="IPR022631">
    <property type="entry name" value="ADOMET_SYNTHASE_CS"/>
</dbReference>
<dbReference type="InterPro" id="IPR022630">
    <property type="entry name" value="S-AdoMet_synt_C"/>
</dbReference>
<dbReference type="InterPro" id="IPR022629">
    <property type="entry name" value="S-AdoMet_synt_central"/>
</dbReference>
<dbReference type="InterPro" id="IPR022628">
    <property type="entry name" value="S-AdoMet_synt_N"/>
</dbReference>
<dbReference type="InterPro" id="IPR002133">
    <property type="entry name" value="S-AdoMet_synthetase"/>
</dbReference>
<dbReference type="InterPro" id="IPR022636">
    <property type="entry name" value="S-AdoMet_synthetase_sfam"/>
</dbReference>
<dbReference type="NCBIfam" id="TIGR01034">
    <property type="entry name" value="metK"/>
    <property type="match status" value="1"/>
</dbReference>
<dbReference type="PANTHER" id="PTHR11964">
    <property type="entry name" value="S-ADENOSYLMETHIONINE SYNTHETASE"/>
    <property type="match status" value="1"/>
</dbReference>
<dbReference type="Pfam" id="PF02773">
    <property type="entry name" value="S-AdoMet_synt_C"/>
    <property type="match status" value="1"/>
</dbReference>
<dbReference type="Pfam" id="PF02772">
    <property type="entry name" value="S-AdoMet_synt_M"/>
    <property type="match status" value="1"/>
</dbReference>
<dbReference type="Pfam" id="PF00438">
    <property type="entry name" value="S-AdoMet_synt_N"/>
    <property type="match status" value="1"/>
</dbReference>
<dbReference type="PIRSF" id="PIRSF000497">
    <property type="entry name" value="MAT"/>
    <property type="match status" value="1"/>
</dbReference>
<dbReference type="SUPFAM" id="SSF55973">
    <property type="entry name" value="S-adenosylmethionine synthetase"/>
    <property type="match status" value="3"/>
</dbReference>
<dbReference type="PROSITE" id="PS00376">
    <property type="entry name" value="ADOMET_SYNTHASE_1"/>
    <property type="match status" value="1"/>
</dbReference>
<dbReference type="PROSITE" id="PS00377">
    <property type="entry name" value="ADOMET_SYNTHASE_2"/>
    <property type="match status" value="1"/>
</dbReference>
<feature type="chain" id="PRO_0000174455" description="S-adenosylmethionine synthase 3">
    <location>
        <begin position="1"/>
        <end position="393"/>
    </location>
</feature>
<feature type="binding site" evidence="2">
    <location>
        <position position="43"/>
    </location>
    <ligand>
        <name>K(+)</name>
        <dbReference type="ChEBI" id="CHEBI:29103"/>
    </ligand>
</feature>
<feature type="binding site" description="in other chain" evidence="2">
    <location>
        <position position="56"/>
    </location>
    <ligand>
        <name>L-methionine</name>
        <dbReference type="ChEBI" id="CHEBI:57844"/>
        <note>ligand shared between two neighboring subunits</note>
    </ligand>
</feature>
<feature type="binding site" description="in other chain" evidence="2">
    <location>
        <position position="99"/>
    </location>
    <ligand>
        <name>L-methionine</name>
        <dbReference type="ChEBI" id="CHEBI:57844"/>
        <note>ligand shared between two neighboring subunits</note>
    </ligand>
</feature>
<feature type="binding site" description="in other chain" evidence="4">
    <location>
        <begin position="167"/>
        <end position="169"/>
    </location>
    <ligand>
        <name>ATP</name>
        <dbReference type="ChEBI" id="CHEBI:30616"/>
        <note>ligand shared between two neighboring subunits</note>
    </ligand>
</feature>
<feature type="binding site" description="in other chain" evidence="4">
    <location>
        <begin position="235"/>
        <end position="238"/>
    </location>
    <ligand>
        <name>ATP</name>
        <dbReference type="ChEBI" id="CHEBI:30616"/>
        <note>ligand shared between two neighboring subunits</note>
    </ligand>
</feature>
<feature type="binding site" description="in other chain" evidence="4">
    <location>
        <position position="246"/>
    </location>
    <ligand>
        <name>ATP</name>
        <dbReference type="ChEBI" id="CHEBI:30616"/>
        <note>ligand shared between two neighboring subunits</note>
    </ligand>
</feature>
<feature type="binding site" evidence="2">
    <location>
        <position position="246"/>
    </location>
    <ligand>
        <name>L-methionine</name>
        <dbReference type="ChEBI" id="CHEBI:57844"/>
        <note>ligand shared between two neighboring subunits</note>
    </ligand>
</feature>
<feature type="binding site" description="in other chain" evidence="2">
    <location>
        <begin position="252"/>
        <end position="253"/>
    </location>
    <ligand>
        <name>ATP</name>
        <dbReference type="ChEBI" id="CHEBI:30616"/>
        <note>ligand shared between two neighboring subunits</note>
    </ligand>
</feature>
<feature type="binding site" evidence="2">
    <location>
        <position position="269"/>
    </location>
    <ligand>
        <name>ATP</name>
        <dbReference type="ChEBI" id="CHEBI:30616"/>
        <note>ligand shared between two neighboring subunits</note>
    </ligand>
</feature>
<feature type="binding site" evidence="2">
    <location>
        <position position="273"/>
    </location>
    <ligand>
        <name>ATP</name>
        <dbReference type="ChEBI" id="CHEBI:30616"/>
        <note>ligand shared between two neighboring subunits</note>
    </ligand>
</feature>
<feature type="binding site" evidence="3">
    <location>
        <position position="277"/>
    </location>
    <ligand>
        <name>ATP</name>
        <dbReference type="ChEBI" id="CHEBI:30616"/>
        <note>ligand shared between two neighboring subunits</note>
    </ligand>
</feature>
<feature type="binding site" description="in other chain" evidence="2">
    <location>
        <position position="277"/>
    </location>
    <ligand>
        <name>L-methionine</name>
        <dbReference type="ChEBI" id="CHEBI:57844"/>
        <note>ligand shared between two neighboring subunits</note>
    </ligand>
</feature>
<keyword id="KW-0067">ATP-binding</keyword>
<keyword id="KW-0170">Cobalt</keyword>
<keyword id="KW-0963">Cytoplasm</keyword>
<keyword id="KW-0460">Magnesium</keyword>
<keyword id="KW-0479">Metal-binding</keyword>
<keyword id="KW-0547">Nucleotide-binding</keyword>
<keyword id="KW-0554">One-carbon metabolism</keyword>
<keyword id="KW-0630">Potassium</keyword>
<keyword id="KW-1185">Reference proteome</keyword>
<keyword id="KW-0808">Transferase</keyword>
<proteinExistence type="evidence at transcript level"/>
<reference key="1">
    <citation type="journal article" date="2018" name="BMC Genomics">
        <title>A manually annotated Actinidia chinensis var. chinensis (kiwifruit) genome highlights the challenges associated with draft genomes and gene prediction in plants.</title>
        <authorList>
            <person name="Pilkington S.M."/>
            <person name="Crowhurst R."/>
            <person name="Hilario E."/>
            <person name="Nardozza S."/>
            <person name="Fraser L."/>
            <person name="Peng Y."/>
            <person name="Gunaseelan K."/>
            <person name="Simpson R."/>
            <person name="Tahir J."/>
            <person name="Deroles S.C."/>
            <person name="Templeton K."/>
            <person name="Luo Z."/>
            <person name="Davy M."/>
            <person name="Cheng C."/>
            <person name="McNeilage M."/>
            <person name="Scaglione D."/>
            <person name="Liu Y."/>
            <person name="Zhang Q."/>
            <person name="Datson P."/>
            <person name="De Silva N."/>
            <person name="Gardiner S.E."/>
            <person name="Bassett H."/>
            <person name="Chagne D."/>
            <person name="McCallum J."/>
            <person name="Dzierzon H."/>
            <person name="Deng C."/>
            <person name="Wang Y.Y."/>
            <person name="Barron L."/>
            <person name="Manako K."/>
            <person name="Bowen J."/>
            <person name="Foster T.M."/>
            <person name="Erridge Z.A."/>
            <person name="Tiffin H."/>
            <person name="Waite C.N."/>
            <person name="Davies K.M."/>
            <person name="Grierson E.P."/>
            <person name="Laing W.A."/>
            <person name="Kirk R."/>
            <person name="Chen X."/>
            <person name="Wood M."/>
            <person name="Montefiori M."/>
            <person name="Brummell D.A."/>
            <person name="Schwinn K.E."/>
            <person name="Catanach A."/>
            <person name="Fullerton C."/>
            <person name="Li D."/>
            <person name="Meiyalaghan S."/>
            <person name="Nieuwenhuizen N."/>
            <person name="Read N."/>
            <person name="Prakash R."/>
            <person name="Hunter D."/>
            <person name="Zhang H."/>
            <person name="McKenzie M."/>
            <person name="Knabel M."/>
            <person name="Harris A."/>
            <person name="Allan A.C."/>
            <person name="Gleave A."/>
            <person name="Chen A."/>
            <person name="Janssen B.J."/>
            <person name="Plunkett B."/>
            <person name="Ampomah-Dwamena C."/>
            <person name="Voogd C."/>
            <person name="Leif D."/>
            <person name="Lafferty D."/>
            <person name="Souleyre E.J.F."/>
            <person name="Varkonyi-Gasic E."/>
            <person name="Gambi F."/>
            <person name="Hanley J."/>
            <person name="Yao J.L."/>
            <person name="Cheung J."/>
            <person name="David K.M."/>
            <person name="Warren B."/>
            <person name="Marsh K."/>
            <person name="Snowden K.C."/>
            <person name="Lin-Wang K."/>
            <person name="Brian L."/>
            <person name="Martinez-Sanchez M."/>
            <person name="Wang M."/>
            <person name="Ileperuma N."/>
            <person name="Macnee N."/>
            <person name="Campin R."/>
            <person name="McAtee P."/>
            <person name="Drummond R.S.M."/>
            <person name="Espley R.V."/>
            <person name="Ireland H.S."/>
            <person name="Wu R."/>
            <person name="Atkinson R.G."/>
            <person name="Karunairetnam S."/>
            <person name="Bulley S."/>
            <person name="Chunkath S."/>
            <person name="Hanley Z."/>
            <person name="Storey R."/>
            <person name="Thrimawithana A.H."/>
            <person name="Thomson S."/>
            <person name="David C."/>
            <person name="Testolin R."/>
            <person name="Huang H."/>
            <person name="Hellens R.P."/>
            <person name="Schaffer R.J."/>
        </authorList>
    </citation>
    <scope>NUCLEOTIDE SEQUENCE [LARGE SCALE GENOMIC DNA]</scope>
    <source>
        <strain>cv. Red5</strain>
    </source>
</reference>
<reference key="2">
    <citation type="journal article" date="1995" name="Plant Physiol.">
        <title>Three cDNAs encoding S-adenosyl-L-methionine synthetase from Actinidia chinensis.</title>
        <authorList>
            <person name="Whittaker D.J."/>
            <person name="Smith G.S."/>
            <person name="Gardner R.C."/>
        </authorList>
    </citation>
    <scope>NUCLEOTIDE SEQUENCE [MRNA] OF 34-393</scope>
    <source>
        <tissue>Fruit</tissue>
    </source>
</reference>
<name>METK3_ACTCC</name>
<gene>
    <name type="primary">SAM3</name>
    <name evidence="7" type="ORF">CEY00_Acc21491</name>
</gene>
<organism>
    <name type="scientific">Actinidia chinensis var. chinensis</name>
    <name type="common">Chinese soft-hair kiwi</name>
    <dbReference type="NCBI Taxonomy" id="1590841"/>
    <lineage>
        <taxon>Eukaryota</taxon>
        <taxon>Viridiplantae</taxon>
        <taxon>Streptophyta</taxon>
        <taxon>Embryophyta</taxon>
        <taxon>Tracheophyta</taxon>
        <taxon>Spermatophyta</taxon>
        <taxon>Magnoliopsida</taxon>
        <taxon>eudicotyledons</taxon>
        <taxon>Gunneridae</taxon>
        <taxon>Pentapetalae</taxon>
        <taxon>asterids</taxon>
        <taxon>Ericales</taxon>
        <taxon>Actinidiaceae</taxon>
        <taxon>Actinidia</taxon>
    </lineage>
</organism>
<protein>
    <recommendedName>
        <fullName>S-adenosylmethionine synthase 3</fullName>
        <shortName>AdoMet synthase 3</shortName>
        <ecNumber evidence="5">2.5.1.6</ecNumber>
    </recommendedName>
    <alternativeName>
        <fullName>Methionine adenosyltransferase 3</fullName>
        <shortName>MAT 3</shortName>
    </alternativeName>
</protein>